<name>JKAMP_MOUSE</name>
<feature type="chain" id="PRO_0000089904" description="JNK1/MAPK8-associated membrane protein">
    <location>
        <begin position="1"/>
        <end position="311"/>
    </location>
</feature>
<feature type="topological domain" description="Lumenal" evidence="1">
    <location>
        <begin position="1"/>
        <end position="57"/>
    </location>
</feature>
<feature type="transmembrane region" description="Helical" evidence="1">
    <location>
        <begin position="58"/>
        <end position="78"/>
    </location>
</feature>
<feature type="topological domain" description="Cytoplasmic" evidence="1">
    <location>
        <begin position="79"/>
        <end position="87"/>
    </location>
</feature>
<feature type="transmembrane region" description="Helical" evidence="1">
    <location>
        <begin position="88"/>
        <end position="108"/>
    </location>
</feature>
<feature type="topological domain" description="Lumenal" evidence="1">
    <location>
        <begin position="109"/>
        <end position="149"/>
    </location>
</feature>
<feature type="transmembrane region" description="Helical" evidence="1">
    <location>
        <begin position="150"/>
        <end position="170"/>
    </location>
</feature>
<feature type="topological domain" description="Cytoplasmic" evidence="1">
    <location>
        <begin position="171"/>
        <end position="188"/>
    </location>
</feature>
<feature type="transmembrane region" description="Helical" evidence="1">
    <location>
        <begin position="189"/>
        <end position="209"/>
    </location>
</feature>
<feature type="topological domain" description="Lumenal" evidence="1">
    <location>
        <position position="210"/>
    </location>
</feature>
<feature type="transmembrane region" description="Helical" evidence="1">
    <location>
        <begin position="211"/>
        <end position="231"/>
    </location>
</feature>
<feature type="topological domain" description="Cytoplasmic" evidence="1">
    <location>
        <begin position="232"/>
        <end position="250"/>
    </location>
</feature>
<feature type="transmembrane region" description="Helical" evidence="1">
    <location>
        <begin position="251"/>
        <end position="271"/>
    </location>
</feature>
<feature type="topological domain" description="Lumenal" evidence="1">
    <location>
        <begin position="272"/>
        <end position="277"/>
    </location>
</feature>
<feature type="transmembrane region" description="Helical" evidence="1">
    <location>
        <begin position="278"/>
        <end position="298"/>
    </location>
</feature>
<feature type="topological domain" description="Cytoplasmic" evidence="1">
    <location>
        <begin position="299"/>
        <end position="311"/>
    </location>
</feature>
<feature type="glycosylation site" description="N-linked (GlcNAc...) asparagine" evidence="2">
    <location>
        <position position="22"/>
    </location>
</feature>
<feature type="splice variant" id="VSP_008813" description="In isoform 2." evidence="5">
    <original>MAVDIQP</original>
    <variation>M</variation>
    <location>
        <begin position="1"/>
        <end position="7"/>
    </location>
</feature>
<feature type="mutagenesis site" description="Loss of glycosylation." evidence="2">
    <original>S</original>
    <variation>A</variation>
    <location>
        <position position="24"/>
    </location>
</feature>
<feature type="sequence conflict" description="In Ref. 2; BAC25088." evidence="6" ref="2">
    <original>H</original>
    <variation>R</variation>
    <location>
        <position position="261"/>
    </location>
</feature>
<feature type="sequence conflict" description="In Ref. 2; BAC25088." evidence="6" ref="2">
    <original>I</original>
    <variation>M</variation>
    <location>
        <position position="303"/>
    </location>
</feature>
<gene>
    <name type="primary">Jkamp</name>
    <name type="synonym">Jamp</name>
</gene>
<sequence>MAVDIQPACLGLYCGKTLLFKNGSSEIYGECGVCPRGQRTNAQKYCQPCTESPELYDWLYLGFMAMLPLVLHWFFIEWYSGKKSSSALFQHITALFECTMAAIITLLVSDPVGVLYIRSCRVLMLSDWYTMLYNPSPDYVTTVHCTHEAVYPLYTIVFVYYAFCLVLMMLLRPLLVKKIACGLGKSDRFKSIYAALYFFPILTVLQAVGGGLLYYAFPYIILVLSLVTLAVYMSASEIENCYDLLVRKKRLIVLFSHWLLHAYGIVSISRVDRLEHDLPLLALVPTPALFYLFTAKFTEPSRILSEGANGH</sequence>
<accession>Q8BI36</accession>
<accession>B8JJ79</accession>
<accession>B8JJ80</accession>
<accession>Q99LT2</accession>
<accession>Q9CUZ1</accession>
<protein>
    <recommendedName>
        <fullName>JNK1/MAPK8-associated membrane protein</fullName>
        <shortName>JKAMP</shortName>
    </recommendedName>
    <alternativeName>
        <fullName>JNK1-associated membrane protein</fullName>
        <shortName>JAMP</shortName>
    </alternativeName>
    <alternativeName>
        <fullName>Medulloblastoma antigen MU-MB-50.4 homolog</fullName>
    </alternativeName>
</protein>
<keyword id="KW-0025">Alternative splicing</keyword>
<keyword id="KW-0256">Endoplasmic reticulum</keyword>
<keyword id="KW-0325">Glycoprotein</keyword>
<keyword id="KW-0472">Membrane</keyword>
<keyword id="KW-1185">Reference proteome</keyword>
<keyword id="KW-0812">Transmembrane</keyword>
<keyword id="KW-1133">Transmembrane helix</keyword>
<keyword id="KW-0832">Ubl conjugation</keyword>
<keyword id="KW-0834">Unfolded protein response</keyword>
<reference key="1">
    <citation type="journal article" date="2005" name="Mol. Cell. Biol.">
        <title>JAMP, a Jun N-terminal kinase 1 (JNK1)-associated membrane protein, regulates duration of JNK activity.</title>
        <authorList>
            <person name="Kadoya T."/>
            <person name="Khurana A."/>
            <person name="Tcherpakov M."/>
            <person name="Bromberg K.D."/>
            <person name="Didier C."/>
            <person name="Broday L."/>
            <person name="Asahara T."/>
            <person name="Bhoumik A."/>
            <person name="Ronai Z."/>
        </authorList>
    </citation>
    <scope>NUCLEOTIDE SEQUENCE [MRNA] (ISOFORM 1)</scope>
    <scope>FUNCTION</scope>
    <scope>SUBCELLULAR LOCATION</scope>
    <scope>TISSUE SPECIFICITY</scope>
    <scope>INTERACTION WITH RNF5 AND MAPK8</scope>
    <scope>MUTAGENESIS OF SER-24</scope>
    <scope>GLYCOSYLATION AT ASN-22</scope>
</reference>
<reference key="2">
    <citation type="journal article" date="2005" name="Science">
        <title>The transcriptional landscape of the mammalian genome.</title>
        <authorList>
            <person name="Carninci P."/>
            <person name="Kasukawa T."/>
            <person name="Katayama S."/>
            <person name="Gough J."/>
            <person name="Frith M.C."/>
            <person name="Maeda N."/>
            <person name="Oyama R."/>
            <person name="Ravasi T."/>
            <person name="Lenhard B."/>
            <person name="Wells C."/>
            <person name="Kodzius R."/>
            <person name="Shimokawa K."/>
            <person name="Bajic V.B."/>
            <person name="Brenner S.E."/>
            <person name="Batalov S."/>
            <person name="Forrest A.R."/>
            <person name="Zavolan M."/>
            <person name="Davis M.J."/>
            <person name="Wilming L.G."/>
            <person name="Aidinis V."/>
            <person name="Allen J.E."/>
            <person name="Ambesi-Impiombato A."/>
            <person name="Apweiler R."/>
            <person name="Aturaliya R.N."/>
            <person name="Bailey T.L."/>
            <person name="Bansal M."/>
            <person name="Baxter L."/>
            <person name="Beisel K.W."/>
            <person name="Bersano T."/>
            <person name="Bono H."/>
            <person name="Chalk A.M."/>
            <person name="Chiu K.P."/>
            <person name="Choudhary V."/>
            <person name="Christoffels A."/>
            <person name="Clutterbuck D.R."/>
            <person name="Crowe M.L."/>
            <person name="Dalla E."/>
            <person name="Dalrymple B.P."/>
            <person name="de Bono B."/>
            <person name="Della Gatta G."/>
            <person name="di Bernardo D."/>
            <person name="Down T."/>
            <person name="Engstrom P."/>
            <person name="Fagiolini M."/>
            <person name="Faulkner G."/>
            <person name="Fletcher C.F."/>
            <person name="Fukushima T."/>
            <person name="Furuno M."/>
            <person name="Futaki S."/>
            <person name="Gariboldi M."/>
            <person name="Georgii-Hemming P."/>
            <person name="Gingeras T.R."/>
            <person name="Gojobori T."/>
            <person name="Green R.E."/>
            <person name="Gustincich S."/>
            <person name="Harbers M."/>
            <person name="Hayashi Y."/>
            <person name="Hensch T.K."/>
            <person name="Hirokawa N."/>
            <person name="Hill D."/>
            <person name="Huminiecki L."/>
            <person name="Iacono M."/>
            <person name="Ikeo K."/>
            <person name="Iwama A."/>
            <person name="Ishikawa T."/>
            <person name="Jakt M."/>
            <person name="Kanapin A."/>
            <person name="Katoh M."/>
            <person name="Kawasawa Y."/>
            <person name="Kelso J."/>
            <person name="Kitamura H."/>
            <person name="Kitano H."/>
            <person name="Kollias G."/>
            <person name="Krishnan S.P."/>
            <person name="Kruger A."/>
            <person name="Kummerfeld S.K."/>
            <person name="Kurochkin I.V."/>
            <person name="Lareau L.F."/>
            <person name="Lazarevic D."/>
            <person name="Lipovich L."/>
            <person name="Liu J."/>
            <person name="Liuni S."/>
            <person name="McWilliam S."/>
            <person name="Madan Babu M."/>
            <person name="Madera M."/>
            <person name="Marchionni L."/>
            <person name="Matsuda H."/>
            <person name="Matsuzawa S."/>
            <person name="Miki H."/>
            <person name="Mignone F."/>
            <person name="Miyake S."/>
            <person name="Morris K."/>
            <person name="Mottagui-Tabar S."/>
            <person name="Mulder N."/>
            <person name="Nakano N."/>
            <person name="Nakauchi H."/>
            <person name="Ng P."/>
            <person name="Nilsson R."/>
            <person name="Nishiguchi S."/>
            <person name="Nishikawa S."/>
            <person name="Nori F."/>
            <person name="Ohara O."/>
            <person name="Okazaki Y."/>
            <person name="Orlando V."/>
            <person name="Pang K.C."/>
            <person name="Pavan W.J."/>
            <person name="Pavesi G."/>
            <person name="Pesole G."/>
            <person name="Petrovsky N."/>
            <person name="Piazza S."/>
            <person name="Reed J."/>
            <person name="Reid J.F."/>
            <person name="Ring B.Z."/>
            <person name="Ringwald M."/>
            <person name="Rost B."/>
            <person name="Ruan Y."/>
            <person name="Salzberg S.L."/>
            <person name="Sandelin A."/>
            <person name="Schneider C."/>
            <person name="Schoenbach C."/>
            <person name="Sekiguchi K."/>
            <person name="Semple C.A."/>
            <person name="Seno S."/>
            <person name="Sessa L."/>
            <person name="Sheng Y."/>
            <person name="Shibata Y."/>
            <person name="Shimada H."/>
            <person name="Shimada K."/>
            <person name="Silva D."/>
            <person name="Sinclair B."/>
            <person name="Sperling S."/>
            <person name="Stupka E."/>
            <person name="Sugiura K."/>
            <person name="Sultana R."/>
            <person name="Takenaka Y."/>
            <person name="Taki K."/>
            <person name="Tammoja K."/>
            <person name="Tan S.L."/>
            <person name="Tang S."/>
            <person name="Taylor M.S."/>
            <person name="Tegner J."/>
            <person name="Teichmann S.A."/>
            <person name="Ueda H.R."/>
            <person name="van Nimwegen E."/>
            <person name="Verardo R."/>
            <person name="Wei C.L."/>
            <person name="Yagi K."/>
            <person name="Yamanishi H."/>
            <person name="Zabarovsky E."/>
            <person name="Zhu S."/>
            <person name="Zimmer A."/>
            <person name="Hide W."/>
            <person name="Bult C."/>
            <person name="Grimmond S.M."/>
            <person name="Teasdale R.D."/>
            <person name="Liu E.T."/>
            <person name="Brusic V."/>
            <person name="Quackenbush J."/>
            <person name="Wahlestedt C."/>
            <person name="Mattick J.S."/>
            <person name="Hume D.A."/>
            <person name="Kai C."/>
            <person name="Sasaki D."/>
            <person name="Tomaru Y."/>
            <person name="Fukuda S."/>
            <person name="Kanamori-Katayama M."/>
            <person name="Suzuki M."/>
            <person name="Aoki J."/>
            <person name="Arakawa T."/>
            <person name="Iida J."/>
            <person name="Imamura K."/>
            <person name="Itoh M."/>
            <person name="Kato T."/>
            <person name="Kawaji H."/>
            <person name="Kawagashira N."/>
            <person name="Kawashima T."/>
            <person name="Kojima M."/>
            <person name="Kondo S."/>
            <person name="Konno H."/>
            <person name="Nakano K."/>
            <person name="Ninomiya N."/>
            <person name="Nishio T."/>
            <person name="Okada M."/>
            <person name="Plessy C."/>
            <person name="Shibata K."/>
            <person name="Shiraki T."/>
            <person name="Suzuki S."/>
            <person name="Tagami M."/>
            <person name="Waki K."/>
            <person name="Watahiki A."/>
            <person name="Okamura-Oho Y."/>
            <person name="Suzuki H."/>
            <person name="Kawai J."/>
            <person name="Hayashizaki Y."/>
        </authorList>
    </citation>
    <scope>NUCLEOTIDE SEQUENCE [LARGE SCALE MRNA] (ISOFORM 2)</scope>
    <source>
        <strain>C57BL/6J</strain>
        <tissue>Hippocampus</tissue>
        <tissue>Lung</tissue>
    </source>
</reference>
<reference key="3">
    <citation type="journal article" date="2009" name="PLoS Biol.">
        <title>Lineage-specific biology revealed by a finished genome assembly of the mouse.</title>
        <authorList>
            <person name="Church D.M."/>
            <person name="Goodstadt L."/>
            <person name="Hillier L.W."/>
            <person name="Zody M.C."/>
            <person name="Goldstein S."/>
            <person name="She X."/>
            <person name="Bult C.J."/>
            <person name="Agarwala R."/>
            <person name="Cherry J.L."/>
            <person name="DiCuccio M."/>
            <person name="Hlavina W."/>
            <person name="Kapustin Y."/>
            <person name="Meric P."/>
            <person name="Maglott D."/>
            <person name="Birtle Z."/>
            <person name="Marques A.C."/>
            <person name="Graves T."/>
            <person name="Zhou S."/>
            <person name="Teague B."/>
            <person name="Potamousis K."/>
            <person name="Churas C."/>
            <person name="Place M."/>
            <person name="Herschleb J."/>
            <person name="Runnheim R."/>
            <person name="Forrest D."/>
            <person name="Amos-Landgraf J."/>
            <person name="Schwartz D.C."/>
            <person name="Cheng Z."/>
            <person name="Lindblad-Toh K."/>
            <person name="Eichler E.E."/>
            <person name="Ponting C.P."/>
        </authorList>
    </citation>
    <scope>NUCLEOTIDE SEQUENCE [LARGE SCALE GENOMIC DNA]</scope>
    <source>
        <strain>C57BL/6J</strain>
    </source>
</reference>
<reference key="4">
    <citation type="journal article" date="2008" name="Mol. Biol. Cell">
        <title>JAMP optimizes ERAD to protect cells from unfolded proteins.</title>
        <authorList>
            <person name="Tcherpakov M."/>
            <person name="Broday L."/>
            <person name="Delaunay A."/>
            <person name="Kadoya T."/>
            <person name="Khurana A."/>
            <person name="Erdjument-Bromage H."/>
            <person name="Tempst P."/>
            <person name="Qiu X.-B."/>
            <person name="DeMartino G.N."/>
            <person name="Ronai Z."/>
        </authorList>
    </citation>
    <scope>FUNCTION</scope>
    <scope>INTERACTION WITH AMFR; CANX; PSMC1; PSMC2; PSMC3; PSMC5; PSMC6; PSMC8; RNF5; SEC61-ALPHA AND UFD1</scope>
    <scope>SUBCELLULAR LOCATION</scope>
</reference>
<reference key="5">
    <citation type="journal article" date="2009" name="J. Biol. Chem.">
        <title>Regulation of endoplasmic reticulum-associated degradation by RNF5-dependent ubiquitination of JNK-associated membrane protein (JAMP).</title>
        <authorList>
            <person name="Tcherpakov M."/>
            <person name="Delaunay A."/>
            <person name="Toth J."/>
            <person name="Kadoya T."/>
            <person name="Petroski M.D."/>
            <person name="Ronai Z.A."/>
        </authorList>
    </citation>
    <scope>INTERACTION WITH RNF5</scope>
    <scope>UBIQUITINATION</scope>
</reference>
<reference key="6">
    <citation type="journal article" date="2004" name="Genome Res.">
        <title>The status, quality, and expansion of the NIH full-length cDNA project: the Mammalian Gene Collection (MGC).</title>
        <authorList>
            <consortium name="The MGC Project Team"/>
        </authorList>
    </citation>
    <scope>NUCLEOTIDE SEQUENCE [LARGE SCALE MRNA] (ISOFORM 1)</scope>
    <source>
        <strain>Czech II</strain>
    </source>
</reference>
<dbReference type="EMBL" id="AK013502">
    <property type="protein sequence ID" value="BAB28884.1"/>
    <property type="molecule type" value="mRNA"/>
</dbReference>
<dbReference type="EMBL" id="AK004555">
    <property type="protein sequence ID" value="BAC25088.1"/>
    <property type="molecule type" value="mRNA"/>
</dbReference>
<dbReference type="EMBL" id="CR974486">
    <property type="status" value="NOT_ANNOTATED_CDS"/>
    <property type="molecule type" value="Genomic_DNA"/>
</dbReference>
<dbReference type="EMBL" id="BC002238">
    <property type="protein sequence ID" value="AAH02238.1"/>
    <property type="molecule type" value="mRNA"/>
</dbReference>
<dbReference type="CCDS" id="CCDS25967.1">
    <molecule id="Q8BI36-1"/>
</dbReference>
<dbReference type="CCDS" id="CCDS56844.1">
    <molecule id="Q8BI36-2"/>
</dbReference>
<dbReference type="RefSeq" id="NP_001191996.1">
    <molecule id="Q8BI36-2"/>
    <property type="nucleotide sequence ID" value="NM_001205067.1"/>
</dbReference>
<dbReference type="RefSeq" id="NP_077167.1">
    <molecule id="Q8BI36-1"/>
    <property type="nucleotide sequence ID" value="NM_024205.2"/>
</dbReference>
<dbReference type="FunCoup" id="Q8BI36">
    <property type="interactions" value="262"/>
</dbReference>
<dbReference type="STRING" id="10090.ENSMUSP00000061370"/>
<dbReference type="GlyCosmos" id="Q8BI36">
    <property type="glycosylation" value="1 site, No reported glycans"/>
</dbReference>
<dbReference type="GlyGen" id="Q8BI36">
    <property type="glycosylation" value="2 sites, 1 N-linked glycan (1 site)"/>
</dbReference>
<dbReference type="iPTMnet" id="Q8BI36"/>
<dbReference type="PhosphoSitePlus" id="Q8BI36"/>
<dbReference type="PaxDb" id="10090-ENSMUSP00000061370"/>
<dbReference type="ProteomicsDB" id="269119">
    <molecule id="Q8BI36-1"/>
</dbReference>
<dbReference type="ProteomicsDB" id="269120">
    <molecule id="Q8BI36-2"/>
</dbReference>
<dbReference type="Ensembl" id="ENSMUST00000057257.10">
    <molecule id="Q8BI36-1"/>
    <property type="protein sequence ID" value="ENSMUSP00000061370.9"/>
    <property type="gene ID" value="ENSMUSG00000005078.17"/>
</dbReference>
<dbReference type="Ensembl" id="ENSMUST00000117449.8">
    <molecule id="Q8BI36-2"/>
    <property type="protein sequence ID" value="ENSMUSP00000113744.2"/>
    <property type="gene ID" value="ENSMUSG00000005078.17"/>
</dbReference>
<dbReference type="GeneID" id="104771"/>
<dbReference type="KEGG" id="mmu:104771"/>
<dbReference type="UCSC" id="uc007nvf.2">
    <molecule id="Q8BI36-1"/>
    <property type="organism name" value="mouse"/>
</dbReference>
<dbReference type="UCSC" id="uc007nvg.2">
    <molecule id="Q8BI36-2"/>
    <property type="organism name" value="mouse"/>
</dbReference>
<dbReference type="AGR" id="MGI:1915057"/>
<dbReference type="CTD" id="51528"/>
<dbReference type="MGI" id="MGI:1915057">
    <property type="gene designation" value="Jkamp"/>
</dbReference>
<dbReference type="VEuPathDB" id="HostDB:ENSMUSG00000005078"/>
<dbReference type="eggNOG" id="KOG3744">
    <property type="taxonomic scope" value="Eukaryota"/>
</dbReference>
<dbReference type="GeneTree" id="ENSGT00390000018097"/>
<dbReference type="HOGENOM" id="CLU_062918_1_0_1"/>
<dbReference type="InParanoid" id="Q8BI36"/>
<dbReference type="OMA" id="CPGIYCG"/>
<dbReference type="OrthoDB" id="5920264at2759"/>
<dbReference type="PhylomeDB" id="Q8BI36"/>
<dbReference type="TreeFam" id="TF314201"/>
<dbReference type="BioGRID-ORCS" id="104771">
    <property type="hits" value="3 hits in 75 CRISPR screens"/>
</dbReference>
<dbReference type="ChiTaRS" id="Jkamp">
    <property type="organism name" value="mouse"/>
</dbReference>
<dbReference type="PRO" id="PR:Q8BI36"/>
<dbReference type="Proteomes" id="UP000000589">
    <property type="component" value="Chromosome 12"/>
</dbReference>
<dbReference type="RNAct" id="Q8BI36">
    <property type="molecule type" value="protein"/>
</dbReference>
<dbReference type="Bgee" id="ENSMUSG00000005078">
    <property type="expression patterns" value="Expressed in facial nucleus and 263 other cell types or tissues"/>
</dbReference>
<dbReference type="ExpressionAtlas" id="Q8BI36">
    <property type="expression patterns" value="baseline and differential"/>
</dbReference>
<dbReference type="GO" id="GO:0005789">
    <property type="term" value="C:endoplasmic reticulum membrane"/>
    <property type="evidence" value="ECO:0007669"/>
    <property type="project" value="UniProtKB-SubCell"/>
</dbReference>
<dbReference type="GO" id="GO:0036503">
    <property type="term" value="P:ERAD pathway"/>
    <property type="evidence" value="ECO:0000250"/>
    <property type="project" value="UniProtKB"/>
</dbReference>
<dbReference type="GO" id="GO:0006986">
    <property type="term" value="P:response to unfolded protein"/>
    <property type="evidence" value="ECO:0007669"/>
    <property type="project" value="UniProtKB-KW"/>
</dbReference>
<dbReference type="InterPro" id="IPR008485">
    <property type="entry name" value="JAMP"/>
</dbReference>
<dbReference type="PANTHER" id="PTHR12740">
    <property type="entry name" value="JNK1/MAPK8-ASSOCIATED MEMBRANE PROTEIN"/>
    <property type="match status" value="1"/>
</dbReference>
<dbReference type="PANTHER" id="PTHR12740:SF4">
    <property type="entry name" value="JNK1_MAPK8-ASSOCIATED MEMBRANE PROTEIN"/>
    <property type="match status" value="1"/>
</dbReference>
<dbReference type="Pfam" id="PF05571">
    <property type="entry name" value="JAMP"/>
    <property type="match status" value="1"/>
</dbReference>
<comment type="function">
    <text evidence="2 3">Regulates the duration of MAPK8 activity in response to various stress stimuli (PubMed:16166642). Facilitates degradation of misfolded endoplasmic reticulum (ER) proteins through the recruitment of components of the proteasome and endoplasmic reticulum-associated degradation (ERAD) system (PubMed:18784250).</text>
</comment>
<comment type="subunit">
    <text evidence="2 3 4">Interacts with RNF5 and MAPK8, but not with MAPK9. Binding to MAPK8 occurs before and after exposure to stress, such as UV irradiation. After exposure to stress, interacts with phosphorylated MAPK8. Competes with DUSP10 for MAPK8 binding (PubMed:16166642, PubMed:19269966). Associates with multiple components of the proteasome and with ERAD regulatory proteins, including AMFR/GP78, CANX, PSMC1, PSMC2, PSMC3/TBP1, PSMC5, PSMC6, PSMD8, SEC61-ALPHA and UFD1 (PubMed:18784250).</text>
</comment>
<comment type="subcellular location">
    <subcellularLocation>
        <location evidence="2 3">Endoplasmic reticulum membrane</location>
        <topology evidence="2 3">Multi-pass membrane protein</topology>
    </subcellularLocation>
</comment>
<comment type="alternative products">
    <event type="alternative splicing"/>
    <isoform>
        <id>Q8BI36-1</id>
        <name>1</name>
        <sequence type="displayed"/>
    </isoform>
    <isoform>
        <id>Q8BI36-2</id>
        <name>2</name>
        <sequence type="described" ref="VSP_008813"/>
    </isoform>
</comment>
<comment type="tissue specificity">
    <text evidence="2">Expressed in numerous tissues, including brain, spleen, thymus, liver, kidney and testis.</text>
</comment>
<comment type="PTM">
    <text evidence="4">Ubiquitinated by RNF5 via 'Lys-63'-linked ubiquitin linkage in a UBE2N-dependent manner. Ubiquitination decreases association with components of the proteasome and ERAD.</text>
</comment>
<organism>
    <name type="scientific">Mus musculus</name>
    <name type="common">Mouse</name>
    <dbReference type="NCBI Taxonomy" id="10090"/>
    <lineage>
        <taxon>Eukaryota</taxon>
        <taxon>Metazoa</taxon>
        <taxon>Chordata</taxon>
        <taxon>Craniata</taxon>
        <taxon>Vertebrata</taxon>
        <taxon>Euteleostomi</taxon>
        <taxon>Mammalia</taxon>
        <taxon>Eutheria</taxon>
        <taxon>Euarchontoglires</taxon>
        <taxon>Glires</taxon>
        <taxon>Rodentia</taxon>
        <taxon>Myomorpha</taxon>
        <taxon>Muroidea</taxon>
        <taxon>Muridae</taxon>
        <taxon>Murinae</taxon>
        <taxon>Mus</taxon>
        <taxon>Mus</taxon>
    </lineage>
</organism>
<evidence type="ECO:0000255" key="1"/>
<evidence type="ECO:0000269" key="2">
    <source>
    </source>
</evidence>
<evidence type="ECO:0000269" key="3">
    <source>
    </source>
</evidence>
<evidence type="ECO:0000269" key="4">
    <source>
    </source>
</evidence>
<evidence type="ECO:0000303" key="5">
    <source>
    </source>
</evidence>
<evidence type="ECO:0000305" key="6"/>
<proteinExistence type="evidence at protein level"/>